<proteinExistence type="inferred from homology"/>
<protein>
    <recommendedName>
        <fullName evidence="1">S-adenosylmethionine synthase</fullName>
        <shortName evidence="1">AdoMet synthase</shortName>
        <ecNumber evidence="1">2.5.1.6</ecNumber>
    </recommendedName>
    <alternativeName>
        <fullName evidence="1">MAT</fullName>
    </alternativeName>
    <alternativeName>
        <fullName evidence="1">Methionine adenosyltransferase</fullName>
    </alternativeName>
</protein>
<accession>Q99Z77</accession>
<accession>Q48Y46</accession>
<keyword id="KW-0067">ATP-binding</keyword>
<keyword id="KW-0963">Cytoplasm</keyword>
<keyword id="KW-0460">Magnesium</keyword>
<keyword id="KW-0479">Metal-binding</keyword>
<keyword id="KW-0547">Nucleotide-binding</keyword>
<keyword id="KW-0554">One-carbon metabolism</keyword>
<keyword id="KW-0630">Potassium</keyword>
<keyword id="KW-1185">Reference proteome</keyword>
<keyword id="KW-0808">Transferase</keyword>
<gene>
    <name evidence="1" type="primary">metK</name>
    <name type="ordered locus">SPy_1359</name>
    <name type="ordered locus">M5005_Spy1108</name>
</gene>
<evidence type="ECO:0000255" key="1">
    <source>
        <dbReference type="HAMAP-Rule" id="MF_00086"/>
    </source>
</evidence>
<organism>
    <name type="scientific">Streptococcus pyogenes serotype M1</name>
    <dbReference type="NCBI Taxonomy" id="301447"/>
    <lineage>
        <taxon>Bacteria</taxon>
        <taxon>Bacillati</taxon>
        <taxon>Bacillota</taxon>
        <taxon>Bacilli</taxon>
        <taxon>Lactobacillales</taxon>
        <taxon>Streptococcaceae</taxon>
        <taxon>Streptococcus</taxon>
    </lineage>
</organism>
<comment type="function">
    <text evidence="1">Catalyzes the formation of S-adenosylmethionine (AdoMet) from methionine and ATP. The overall synthetic reaction is composed of two sequential steps, AdoMet formation and the subsequent tripolyphosphate hydrolysis which occurs prior to release of AdoMet from the enzyme.</text>
</comment>
<comment type="catalytic activity">
    <reaction evidence="1">
        <text>L-methionine + ATP + H2O = S-adenosyl-L-methionine + phosphate + diphosphate</text>
        <dbReference type="Rhea" id="RHEA:21080"/>
        <dbReference type="ChEBI" id="CHEBI:15377"/>
        <dbReference type="ChEBI" id="CHEBI:30616"/>
        <dbReference type="ChEBI" id="CHEBI:33019"/>
        <dbReference type="ChEBI" id="CHEBI:43474"/>
        <dbReference type="ChEBI" id="CHEBI:57844"/>
        <dbReference type="ChEBI" id="CHEBI:59789"/>
        <dbReference type="EC" id="2.5.1.6"/>
    </reaction>
</comment>
<comment type="cofactor">
    <cofactor evidence="1">
        <name>Mg(2+)</name>
        <dbReference type="ChEBI" id="CHEBI:18420"/>
    </cofactor>
    <text evidence="1">Binds 2 divalent ions per subunit.</text>
</comment>
<comment type="cofactor">
    <cofactor evidence="1">
        <name>K(+)</name>
        <dbReference type="ChEBI" id="CHEBI:29103"/>
    </cofactor>
    <text evidence="1">Binds 1 potassium ion per subunit.</text>
</comment>
<comment type="pathway">
    <text evidence="1">Amino-acid biosynthesis; S-adenosyl-L-methionine biosynthesis; S-adenosyl-L-methionine from L-methionine: step 1/1.</text>
</comment>
<comment type="subunit">
    <text evidence="1">Homotetramer; dimer of dimers.</text>
</comment>
<comment type="subcellular location">
    <subcellularLocation>
        <location evidence="1">Cytoplasm</location>
    </subcellularLocation>
</comment>
<comment type="similarity">
    <text evidence="1">Belongs to the AdoMet synthase family.</text>
</comment>
<name>METK_STRP1</name>
<feature type="chain" id="PRO_0000174603" description="S-adenosylmethionine synthase">
    <location>
        <begin position="1"/>
        <end position="398"/>
    </location>
</feature>
<feature type="region of interest" description="Flexible loop" evidence="1">
    <location>
        <begin position="100"/>
        <end position="110"/>
    </location>
</feature>
<feature type="binding site" description="in other chain" evidence="1">
    <location>
        <position position="16"/>
    </location>
    <ligand>
        <name>ATP</name>
        <dbReference type="ChEBI" id="CHEBI:30616"/>
        <note>ligand shared between two neighboring subunits</note>
    </ligand>
</feature>
<feature type="binding site" evidence="1">
    <location>
        <position position="18"/>
    </location>
    <ligand>
        <name>Mg(2+)</name>
        <dbReference type="ChEBI" id="CHEBI:18420"/>
    </ligand>
</feature>
<feature type="binding site" evidence="1">
    <location>
        <position position="44"/>
    </location>
    <ligand>
        <name>K(+)</name>
        <dbReference type="ChEBI" id="CHEBI:29103"/>
    </ligand>
</feature>
<feature type="binding site" description="in other chain" evidence="1">
    <location>
        <position position="57"/>
    </location>
    <ligand>
        <name>L-methionine</name>
        <dbReference type="ChEBI" id="CHEBI:57844"/>
        <note>ligand shared between two neighboring subunits</note>
    </ligand>
</feature>
<feature type="binding site" description="in other chain" evidence="1">
    <location>
        <position position="100"/>
    </location>
    <ligand>
        <name>L-methionine</name>
        <dbReference type="ChEBI" id="CHEBI:57844"/>
        <note>ligand shared between two neighboring subunits</note>
    </ligand>
</feature>
<feature type="binding site" description="in other chain" evidence="1">
    <location>
        <begin position="174"/>
        <end position="176"/>
    </location>
    <ligand>
        <name>ATP</name>
        <dbReference type="ChEBI" id="CHEBI:30616"/>
        <note>ligand shared between two neighboring subunits</note>
    </ligand>
</feature>
<feature type="binding site" description="in other chain" evidence="1">
    <location>
        <begin position="241"/>
        <end position="242"/>
    </location>
    <ligand>
        <name>ATP</name>
        <dbReference type="ChEBI" id="CHEBI:30616"/>
        <note>ligand shared between two neighboring subunits</note>
    </ligand>
</feature>
<feature type="binding site" evidence="1">
    <location>
        <position position="250"/>
    </location>
    <ligand>
        <name>ATP</name>
        <dbReference type="ChEBI" id="CHEBI:30616"/>
        <note>ligand shared between two neighboring subunits</note>
    </ligand>
</feature>
<feature type="binding site" evidence="1">
    <location>
        <position position="250"/>
    </location>
    <ligand>
        <name>L-methionine</name>
        <dbReference type="ChEBI" id="CHEBI:57844"/>
        <note>ligand shared between two neighboring subunits</note>
    </ligand>
</feature>
<feature type="binding site" description="in other chain" evidence="1">
    <location>
        <begin position="256"/>
        <end position="257"/>
    </location>
    <ligand>
        <name>ATP</name>
        <dbReference type="ChEBI" id="CHEBI:30616"/>
        <note>ligand shared between two neighboring subunits</note>
    </ligand>
</feature>
<feature type="binding site" evidence="1">
    <location>
        <position position="273"/>
    </location>
    <ligand>
        <name>ATP</name>
        <dbReference type="ChEBI" id="CHEBI:30616"/>
        <note>ligand shared between two neighboring subunits</note>
    </ligand>
</feature>
<feature type="binding site" evidence="1">
    <location>
        <position position="277"/>
    </location>
    <ligand>
        <name>ATP</name>
        <dbReference type="ChEBI" id="CHEBI:30616"/>
        <note>ligand shared between two neighboring subunits</note>
    </ligand>
</feature>
<feature type="binding site" description="in other chain" evidence="1">
    <location>
        <position position="281"/>
    </location>
    <ligand>
        <name>L-methionine</name>
        <dbReference type="ChEBI" id="CHEBI:57844"/>
        <note>ligand shared between two neighboring subunits</note>
    </ligand>
</feature>
<dbReference type="EC" id="2.5.1.6" evidence="1"/>
<dbReference type="EMBL" id="AE004092">
    <property type="protein sequence ID" value="AAK34187.1"/>
    <property type="molecule type" value="Genomic_DNA"/>
</dbReference>
<dbReference type="EMBL" id="CP000017">
    <property type="protein sequence ID" value="AAZ51726.1"/>
    <property type="molecule type" value="Genomic_DNA"/>
</dbReference>
<dbReference type="RefSeq" id="NP_269466.1">
    <property type="nucleotide sequence ID" value="NC_002737.2"/>
</dbReference>
<dbReference type="SMR" id="Q99Z77"/>
<dbReference type="PaxDb" id="1314-HKU360_01141"/>
<dbReference type="KEGG" id="spy:SPy_1359"/>
<dbReference type="KEGG" id="spz:M5005_Spy1108"/>
<dbReference type="PATRIC" id="fig|160490.10.peg.1186"/>
<dbReference type="HOGENOM" id="CLU_041802_1_1_9"/>
<dbReference type="OMA" id="ASYMARY"/>
<dbReference type="UniPathway" id="UPA00315">
    <property type="reaction ID" value="UER00080"/>
</dbReference>
<dbReference type="Proteomes" id="UP000000750">
    <property type="component" value="Chromosome"/>
</dbReference>
<dbReference type="GO" id="GO:0005737">
    <property type="term" value="C:cytoplasm"/>
    <property type="evidence" value="ECO:0007669"/>
    <property type="project" value="UniProtKB-SubCell"/>
</dbReference>
<dbReference type="GO" id="GO:0005524">
    <property type="term" value="F:ATP binding"/>
    <property type="evidence" value="ECO:0007669"/>
    <property type="project" value="UniProtKB-UniRule"/>
</dbReference>
<dbReference type="GO" id="GO:0000287">
    <property type="term" value="F:magnesium ion binding"/>
    <property type="evidence" value="ECO:0007669"/>
    <property type="project" value="UniProtKB-UniRule"/>
</dbReference>
<dbReference type="GO" id="GO:0004478">
    <property type="term" value="F:methionine adenosyltransferase activity"/>
    <property type="evidence" value="ECO:0007669"/>
    <property type="project" value="UniProtKB-UniRule"/>
</dbReference>
<dbReference type="GO" id="GO:0006730">
    <property type="term" value="P:one-carbon metabolic process"/>
    <property type="evidence" value="ECO:0007669"/>
    <property type="project" value="UniProtKB-KW"/>
</dbReference>
<dbReference type="GO" id="GO:0006556">
    <property type="term" value="P:S-adenosylmethionine biosynthetic process"/>
    <property type="evidence" value="ECO:0007669"/>
    <property type="project" value="UniProtKB-UniRule"/>
</dbReference>
<dbReference type="CDD" id="cd18079">
    <property type="entry name" value="S-AdoMet_synt"/>
    <property type="match status" value="1"/>
</dbReference>
<dbReference type="FunFam" id="3.30.300.10:FF:000003">
    <property type="entry name" value="S-adenosylmethionine synthase"/>
    <property type="match status" value="1"/>
</dbReference>
<dbReference type="Gene3D" id="3.30.300.10">
    <property type="match status" value="3"/>
</dbReference>
<dbReference type="HAMAP" id="MF_00086">
    <property type="entry name" value="S_AdoMet_synth1"/>
    <property type="match status" value="1"/>
</dbReference>
<dbReference type="InterPro" id="IPR022631">
    <property type="entry name" value="ADOMET_SYNTHASE_CS"/>
</dbReference>
<dbReference type="InterPro" id="IPR022630">
    <property type="entry name" value="S-AdoMet_synt_C"/>
</dbReference>
<dbReference type="InterPro" id="IPR022629">
    <property type="entry name" value="S-AdoMet_synt_central"/>
</dbReference>
<dbReference type="InterPro" id="IPR022628">
    <property type="entry name" value="S-AdoMet_synt_N"/>
</dbReference>
<dbReference type="InterPro" id="IPR002133">
    <property type="entry name" value="S-AdoMet_synthetase"/>
</dbReference>
<dbReference type="InterPro" id="IPR022636">
    <property type="entry name" value="S-AdoMet_synthetase_sfam"/>
</dbReference>
<dbReference type="NCBIfam" id="TIGR01034">
    <property type="entry name" value="metK"/>
    <property type="match status" value="1"/>
</dbReference>
<dbReference type="PANTHER" id="PTHR11964">
    <property type="entry name" value="S-ADENOSYLMETHIONINE SYNTHETASE"/>
    <property type="match status" value="1"/>
</dbReference>
<dbReference type="Pfam" id="PF02773">
    <property type="entry name" value="S-AdoMet_synt_C"/>
    <property type="match status" value="1"/>
</dbReference>
<dbReference type="Pfam" id="PF02772">
    <property type="entry name" value="S-AdoMet_synt_M"/>
    <property type="match status" value="1"/>
</dbReference>
<dbReference type="Pfam" id="PF00438">
    <property type="entry name" value="S-AdoMet_synt_N"/>
    <property type="match status" value="1"/>
</dbReference>
<dbReference type="PIRSF" id="PIRSF000497">
    <property type="entry name" value="MAT"/>
    <property type="match status" value="1"/>
</dbReference>
<dbReference type="SUPFAM" id="SSF55973">
    <property type="entry name" value="S-adenosylmethionine synthetase"/>
    <property type="match status" value="3"/>
</dbReference>
<dbReference type="PROSITE" id="PS00376">
    <property type="entry name" value="ADOMET_SYNTHASE_1"/>
    <property type="match status" value="1"/>
</dbReference>
<dbReference type="PROSITE" id="PS00377">
    <property type="entry name" value="ADOMET_SYNTHASE_2"/>
    <property type="match status" value="1"/>
</dbReference>
<reference key="1">
    <citation type="journal article" date="2001" name="Proc. Natl. Acad. Sci. U.S.A.">
        <title>Complete genome sequence of an M1 strain of Streptococcus pyogenes.</title>
        <authorList>
            <person name="Ferretti J.J."/>
            <person name="McShan W.M."/>
            <person name="Ajdic D.J."/>
            <person name="Savic D.J."/>
            <person name="Savic G."/>
            <person name="Lyon K."/>
            <person name="Primeaux C."/>
            <person name="Sezate S."/>
            <person name="Suvorov A.N."/>
            <person name="Kenton S."/>
            <person name="Lai H.S."/>
            <person name="Lin S.P."/>
            <person name="Qian Y."/>
            <person name="Jia H.G."/>
            <person name="Najar F.Z."/>
            <person name="Ren Q."/>
            <person name="Zhu H."/>
            <person name="Song L."/>
            <person name="White J."/>
            <person name="Yuan X."/>
            <person name="Clifton S.W."/>
            <person name="Roe B.A."/>
            <person name="McLaughlin R.E."/>
        </authorList>
    </citation>
    <scope>NUCLEOTIDE SEQUENCE [LARGE SCALE GENOMIC DNA]</scope>
    <source>
        <strain>ATCC 700294 / SF370 / Serotype M1</strain>
    </source>
</reference>
<reference key="2">
    <citation type="journal article" date="2005" name="J. Infect. Dis.">
        <title>Evolutionary origin and emergence of a highly successful clone of serotype M1 group A Streptococcus involved multiple horizontal gene transfer events.</title>
        <authorList>
            <person name="Sumby P."/>
            <person name="Porcella S.F."/>
            <person name="Madrigal A.G."/>
            <person name="Barbian K.D."/>
            <person name="Virtaneva K."/>
            <person name="Ricklefs S.M."/>
            <person name="Sturdevant D.E."/>
            <person name="Graham M.R."/>
            <person name="Vuopio-Varkila J."/>
            <person name="Hoe N.P."/>
            <person name="Musser J.M."/>
        </authorList>
    </citation>
    <scope>NUCLEOTIDE SEQUENCE [LARGE SCALE GENOMIC DNA]</scope>
    <source>
        <strain>ATCC BAA-947 / MGAS5005 / Serotype M1</strain>
    </source>
</reference>
<sequence>MSERKLFTSESVSEGHPDKIADQISDAILDAILAEDPEAHVAAETCVYTGSVHVFGEISTTAYIDINRVVRDTIAEIGYTEAEYGFSAESVGVHPSLVEQSGDIAQGVNEAFESREGDTDDLSHIGAGDQGLMFGFAINETPELMPLPISLSHQLVRRLAELRKSGEISYLRPDAKSQVTVEYDEHDKPVRVDTVVISTQHDPEATNDQIRQDVIEKVIKAVIPADYLDDDTKFFINPTGRFVIGGPQGDSGLTGRKIIVDTYGGYSRHGGGAFSGKDATKVDRSASYAARYIAKNLVAAGLVTKAEVQLAYAIGVAQPVSVRVDTFGTSTVPEAVLEAAVRQVFDLRPAGIIQMLDLKRPIYKQTAAYGHMGRTDIDLPWERLNKVDALVEAVKTVL</sequence>